<proteinExistence type="inferred from homology"/>
<evidence type="ECO:0000255" key="1">
    <source>
        <dbReference type="HAMAP-Rule" id="MF_00036"/>
    </source>
</evidence>
<comment type="function">
    <text evidence="1">Catalyzes the attachment of alanine to tRNA(Ala) in a two-step reaction: alanine is first activated by ATP to form Ala-AMP and then transferred to the acceptor end of tRNA(Ala). Also edits incorrectly charged Ser-tRNA(Ala) and Gly-tRNA(Ala) via its editing domain.</text>
</comment>
<comment type="catalytic activity">
    <reaction evidence="1">
        <text>tRNA(Ala) + L-alanine + ATP = L-alanyl-tRNA(Ala) + AMP + diphosphate</text>
        <dbReference type="Rhea" id="RHEA:12540"/>
        <dbReference type="Rhea" id="RHEA-COMP:9657"/>
        <dbReference type="Rhea" id="RHEA-COMP:9923"/>
        <dbReference type="ChEBI" id="CHEBI:30616"/>
        <dbReference type="ChEBI" id="CHEBI:33019"/>
        <dbReference type="ChEBI" id="CHEBI:57972"/>
        <dbReference type="ChEBI" id="CHEBI:78442"/>
        <dbReference type="ChEBI" id="CHEBI:78497"/>
        <dbReference type="ChEBI" id="CHEBI:456215"/>
        <dbReference type="EC" id="6.1.1.7"/>
    </reaction>
</comment>
<comment type="cofactor">
    <cofactor evidence="1">
        <name>Zn(2+)</name>
        <dbReference type="ChEBI" id="CHEBI:29105"/>
    </cofactor>
    <text evidence="1">Binds 1 zinc ion per subunit.</text>
</comment>
<comment type="subcellular location">
    <subcellularLocation>
        <location evidence="1">Cytoplasm</location>
    </subcellularLocation>
</comment>
<comment type="domain">
    <text evidence="1">Consists of three domains; the N-terminal catalytic domain, the editing domain and the C-terminal C-Ala domain. The editing domain removes incorrectly charged amino acids, while the C-Ala domain, along with tRNA(Ala), serves as a bridge to cooperatively bring together the editing and aminoacylation centers thus stimulating deacylation of misacylated tRNAs.</text>
</comment>
<comment type="similarity">
    <text evidence="1">Belongs to the class-II aminoacyl-tRNA synthetase family.</text>
</comment>
<protein>
    <recommendedName>
        <fullName evidence="1">Alanine--tRNA ligase</fullName>
        <ecNumber evidence="1">6.1.1.7</ecNumber>
    </recommendedName>
    <alternativeName>
        <fullName evidence="1">Alanyl-tRNA synthetase</fullName>
        <shortName evidence="1">AlaRS</shortName>
    </alternativeName>
</protein>
<name>SYA_SYNSC</name>
<accession>Q3AGN4</accession>
<sequence length="889" mass="95105">MVAVASSSSAASAPRSGEEIREAFLNFYAERGHKRMASASLIPDDPTVLLTIAGMLPFKPVFLGQQERPAPRATSSQKCIRTNDIENVGRTARHHTFFEMLGNFSFGDYFKQRAIEWAWELSTGVYGIDPKNLVVSVFREDDEAELIWRDVVGVNPKRIIRMDEADNFWASGPTGPCGPCSEIYYDFKPELGDEDIDLEDDDRFIEFYNLVFMQYNRDAEGTLTPLANRNIDTGMGLERMAQILQKVPNNYETDLIFPLIQAAADLAGVDYHQLNDKGKTSLKVIGDHSRAVTQLICDGVTASNLGRGYILRRLLRRVVRHGRLLGIDKPFLVTMGEAAIALLKGAHPSVIERQEVILAELQREEARFLETLERGEKLLAEVLASKPTQISGAQAFELYDTYGFPLELTQEIAEEQGLAVDLDGFEAAMEEQRQRAKAAAVSIDLTLQDAIDQVVADQAATCFEGYEALDHASCVQALVVNGGPSTTAKAGDAVQVVLDTTPFYGEGGGQVGDRGVLAGSDLIVRIESVSRSRDVFVHAGRVERGELALGDTVKAQVDRACRRRAQANHTATHLLQAALKQVVDPGIGQAGSLVDFDRLRFDFHCPTAVTPDQLQQVETLINGWINEAHALQVQEMAIDQAKAAGAVAMFGEKYADVVRVVDVPGVSMELCGGTHVTNTAEIGLFKIVAESGVAAGIRRIEAVAGPAVLAYLNERDVVVKQLGDRFKAQPAEIVDRVAALQEELKATGKALAAAQAELAVAKAGALAAKAEAVGDFQLLVERLDGVDGAGLQGAAQSLADQLGDGAAVVIGGLPDPGDMGKVILVAAFGQQVIAAKLQAGKFIGGIAKQCGGGGGGRPNLAQAGGRDGAALPGALDAAQAELTSAFRAL</sequence>
<gene>
    <name evidence="1" type="primary">alaS</name>
    <name type="ordered locus">Syncc9605_2518</name>
</gene>
<reference key="1">
    <citation type="submission" date="2005-07" db="EMBL/GenBank/DDBJ databases">
        <title>Complete sequence of Synechococcus sp. CC9605.</title>
        <authorList>
            <consortium name="US DOE Joint Genome Institute"/>
            <person name="Copeland A."/>
            <person name="Lucas S."/>
            <person name="Lapidus A."/>
            <person name="Barry K."/>
            <person name="Detter J.C."/>
            <person name="Glavina T."/>
            <person name="Hammon N."/>
            <person name="Israni S."/>
            <person name="Pitluck S."/>
            <person name="Schmutz J."/>
            <person name="Martinez M."/>
            <person name="Larimer F."/>
            <person name="Land M."/>
            <person name="Kyrpides N."/>
            <person name="Ivanova N."/>
            <person name="Richardson P."/>
        </authorList>
    </citation>
    <scope>NUCLEOTIDE SEQUENCE [LARGE SCALE GENOMIC DNA]</scope>
    <source>
        <strain>CC9605</strain>
    </source>
</reference>
<organism>
    <name type="scientific">Synechococcus sp. (strain CC9605)</name>
    <dbReference type="NCBI Taxonomy" id="110662"/>
    <lineage>
        <taxon>Bacteria</taxon>
        <taxon>Bacillati</taxon>
        <taxon>Cyanobacteriota</taxon>
        <taxon>Cyanophyceae</taxon>
        <taxon>Synechococcales</taxon>
        <taxon>Synechococcaceae</taxon>
        <taxon>Synechococcus</taxon>
    </lineage>
</organism>
<keyword id="KW-0030">Aminoacyl-tRNA synthetase</keyword>
<keyword id="KW-0067">ATP-binding</keyword>
<keyword id="KW-0963">Cytoplasm</keyword>
<keyword id="KW-0436">Ligase</keyword>
<keyword id="KW-0479">Metal-binding</keyword>
<keyword id="KW-0547">Nucleotide-binding</keyword>
<keyword id="KW-0648">Protein biosynthesis</keyword>
<keyword id="KW-0694">RNA-binding</keyword>
<keyword id="KW-0820">tRNA-binding</keyword>
<keyword id="KW-0862">Zinc</keyword>
<dbReference type="EC" id="6.1.1.7" evidence="1"/>
<dbReference type="EMBL" id="CP000110">
    <property type="protein sequence ID" value="ABB36248.1"/>
    <property type="molecule type" value="Genomic_DNA"/>
</dbReference>
<dbReference type="RefSeq" id="WP_011365443.1">
    <property type="nucleotide sequence ID" value="NC_007516.1"/>
</dbReference>
<dbReference type="SMR" id="Q3AGN4"/>
<dbReference type="STRING" id="110662.Syncc9605_2518"/>
<dbReference type="KEGG" id="syd:Syncc9605_2518"/>
<dbReference type="eggNOG" id="COG0013">
    <property type="taxonomic scope" value="Bacteria"/>
</dbReference>
<dbReference type="HOGENOM" id="CLU_004485_1_0_3"/>
<dbReference type="OrthoDB" id="9803884at2"/>
<dbReference type="GO" id="GO:0005829">
    <property type="term" value="C:cytosol"/>
    <property type="evidence" value="ECO:0007669"/>
    <property type="project" value="TreeGrafter"/>
</dbReference>
<dbReference type="GO" id="GO:0004813">
    <property type="term" value="F:alanine-tRNA ligase activity"/>
    <property type="evidence" value="ECO:0007669"/>
    <property type="project" value="UniProtKB-UniRule"/>
</dbReference>
<dbReference type="GO" id="GO:0002161">
    <property type="term" value="F:aminoacyl-tRNA deacylase activity"/>
    <property type="evidence" value="ECO:0007669"/>
    <property type="project" value="TreeGrafter"/>
</dbReference>
<dbReference type="GO" id="GO:0005524">
    <property type="term" value="F:ATP binding"/>
    <property type="evidence" value="ECO:0007669"/>
    <property type="project" value="UniProtKB-UniRule"/>
</dbReference>
<dbReference type="GO" id="GO:0000049">
    <property type="term" value="F:tRNA binding"/>
    <property type="evidence" value="ECO:0007669"/>
    <property type="project" value="UniProtKB-KW"/>
</dbReference>
<dbReference type="GO" id="GO:0008270">
    <property type="term" value="F:zinc ion binding"/>
    <property type="evidence" value="ECO:0007669"/>
    <property type="project" value="UniProtKB-UniRule"/>
</dbReference>
<dbReference type="GO" id="GO:0006419">
    <property type="term" value="P:alanyl-tRNA aminoacylation"/>
    <property type="evidence" value="ECO:0007669"/>
    <property type="project" value="UniProtKB-UniRule"/>
</dbReference>
<dbReference type="CDD" id="cd00673">
    <property type="entry name" value="AlaRS_core"/>
    <property type="match status" value="1"/>
</dbReference>
<dbReference type="FunFam" id="3.10.310.40:FF:000001">
    <property type="entry name" value="Alanine--tRNA ligase"/>
    <property type="match status" value="1"/>
</dbReference>
<dbReference type="FunFam" id="3.30.54.20:FF:000001">
    <property type="entry name" value="Alanine--tRNA ligase"/>
    <property type="match status" value="1"/>
</dbReference>
<dbReference type="FunFam" id="3.30.930.10:FF:000004">
    <property type="entry name" value="Alanine--tRNA ligase"/>
    <property type="match status" value="1"/>
</dbReference>
<dbReference type="FunFam" id="3.30.980.10:FF:000004">
    <property type="entry name" value="Alanine--tRNA ligase, cytoplasmic"/>
    <property type="match status" value="1"/>
</dbReference>
<dbReference type="Gene3D" id="2.40.30.130">
    <property type="match status" value="1"/>
</dbReference>
<dbReference type="Gene3D" id="3.10.310.40">
    <property type="match status" value="1"/>
</dbReference>
<dbReference type="Gene3D" id="3.30.54.20">
    <property type="match status" value="1"/>
</dbReference>
<dbReference type="Gene3D" id="6.10.250.550">
    <property type="match status" value="1"/>
</dbReference>
<dbReference type="Gene3D" id="3.30.930.10">
    <property type="entry name" value="Bira Bifunctional Protein, Domain 2"/>
    <property type="match status" value="1"/>
</dbReference>
<dbReference type="Gene3D" id="3.30.980.10">
    <property type="entry name" value="Threonyl-trna Synthetase, Chain A, domain 2"/>
    <property type="match status" value="1"/>
</dbReference>
<dbReference type="HAMAP" id="MF_00036_B">
    <property type="entry name" value="Ala_tRNA_synth_B"/>
    <property type="match status" value="1"/>
</dbReference>
<dbReference type="InterPro" id="IPR045864">
    <property type="entry name" value="aa-tRNA-synth_II/BPL/LPL"/>
</dbReference>
<dbReference type="InterPro" id="IPR002318">
    <property type="entry name" value="Ala-tRNA-lgiase_IIc"/>
</dbReference>
<dbReference type="InterPro" id="IPR018162">
    <property type="entry name" value="Ala-tRNA-ligase_IIc_anticod-bd"/>
</dbReference>
<dbReference type="InterPro" id="IPR018165">
    <property type="entry name" value="Ala-tRNA-synth_IIc_core"/>
</dbReference>
<dbReference type="InterPro" id="IPR018164">
    <property type="entry name" value="Ala-tRNA-synth_IIc_N"/>
</dbReference>
<dbReference type="InterPro" id="IPR050058">
    <property type="entry name" value="Ala-tRNA_ligase"/>
</dbReference>
<dbReference type="InterPro" id="IPR023033">
    <property type="entry name" value="Ala_tRNA_ligase_euk/bac"/>
</dbReference>
<dbReference type="InterPro" id="IPR003156">
    <property type="entry name" value="DHHA1_dom"/>
</dbReference>
<dbReference type="InterPro" id="IPR018163">
    <property type="entry name" value="Thr/Ala-tRNA-synth_IIc_edit"/>
</dbReference>
<dbReference type="InterPro" id="IPR009000">
    <property type="entry name" value="Transl_B-barrel_sf"/>
</dbReference>
<dbReference type="InterPro" id="IPR012947">
    <property type="entry name" value="tRNA_SAD"/>
</dbReference>
<dbReference type="NCBIfam" id="TIGR00344">
    <property type="entry name" value="alaS"/>
    <property type="match status" value="1"/>
</dbReference>
<dbReference type="PANTHER" id="PTHR11777:SF9">
    <property type="entry name" value="ALANINE--TRNA LIGASE, CYTOPLASMIC"/>
    <property type="match status" value="1"/>
</dbReference>
<dbReference type="PANTHER" id="PTHR11777">
    <property type="entry name" value="ALANYL-TRNA SYNTHETASE"/>
    <property type="match status" value="1"/>
</dbReference>
<dbReference type="Pfam" id="PF02272">
    <property type="entry name" value="DHHA1"/>
    <property type="match status" value="1"/>
</dbReference>
<dbReference type="Pfam" id="PF01411">
    <property type="entry name" value="tRNA-synt_2c"/>
    <property type="match status" value="1"/>
</dbReference>
<dbReference type="Pfam" id="PF07973">
    <property type="entry name" value="tRNA_SAD"/>
    <property type="match status" value="1"/>
</dbReference>
<dbReference type="PRINTS" id="PR00980">
    <property type="entry name" value="TRNASYNTHALA"/>
</dbReference>
<dbReference type="SMART" id="SM00863">
    <property type="entry name" value="tRNA_SAD"/>
    <property type="match status" value="1"/>
</dbReference>
<dbReference type="SUPFAM" id="SSF55681">
    <property type="entry name" value="Class II aaRS and biotin synthetases"/>
    <property type="match status" value="1"/>
</dbReference>
<dbReference type="SUPFAM" id="SSF101353">
    <property type="entry name" value="Putative anticodon-binding domain of alanyl-tRNA synthetase (AlaRS)"/>
    <property type="match status" value="1"/>
</dbReference>
<dbReference type="SUPFAM" id="SSF55186">
    <property type="entry name" value="ThrRS/AlaRS common domain"/>
    <property type="match status" value="1"/>
</dbReference>
<dbReference type="SUPFAM" id="SSF50447">
    <property type="entry name" value="Translation proteins"/>
    <property type="match status" value="1"/>
</dbReference>
<dbReference type="PROSITE" id="PS50860">
    <property type="entry name" value="AA_TRNA_LIGASE_II_ALA"/>
    <property type="match status" value="1"/>
</dbReference>
<feature type="chain" id="PRO_0000347838" description="Alanine--tRNA ligase">
    <location>
        <begin position="1"/>
        <end position="889"/>
    </location>
</feature>
<feature type="binding site" evidence="1">
    <location>
        <position position="569"/>
    </location>
    <ligand>
        <name>Zn(2+)</name>
        <dbReference type="ChEBI" id="CHEBI:29105"/>
    </ligand>
</feature>
<feature type="binding site" evidence="1">
    <location>
        <position position="573"/>
    </location>
    <ligand>
        <name>Zn(2+)</name>
        <dbReference type="ChEBI" id="CHEBI:29105"/>
    </ligand>
</feature>
<feature type="binding site" evidence="1">
    <location>
        <position position="671"/>
    </location>
    <ligand>
        <name>Zn(2+)</name>
        <dbReference type="ChEBI" id="CHEBI:29105"/>
    </ligand>
</feature>
<feature type="binding site" evidence="1">
    <location>
        <position position="675"/>
    </location>
    <ligand>
        <name>Zn(2+)</name>
        <dbReference type="ChEBI" id="CHEBI:29105"/>
    </ligand>
</feature>